<comment type="function">
    <text evidence="1">Part of the high-affinity ATP-driven potassium transport (or Kdp) system, which catalyzes the hydrolysis of ATP coupled with the electrogenic transport of potassium into the cytoplasm. This subunit acts as a catalytic chaperone that increases the ATP-binding affinity of the ATP-hydrolyzing subunit KdpB by the formation of a transient KdpB/KdpC/ATP ternary complex.</text>
</comment>
<comment type="subunit">
    <text evidence="1">The system is composed of three essential subunits: KdpA, KdpB and KdpC.</text>
</comment>
<comment type="subcellular location">
    <subcellularLocation>
        <location evidence="1">Cell inner membrane</location>
        <topology evidence="1">Single-pass membrane protein</topology>
    </subcellularLocation>
</comment>
<comment type="similarity">
    <text evidence="1">Belongs to the KdpC family.</text>
</comment>
<name>KDPC_ECO24</name>
<feature type="chain" id="PRO_1000059215" description="Potassium-transporting ATPase KdpC subunit">
    <location>
        <begin position="1"/>
        <end position="190"/>
    </location>
</feature>
<feature type="transmembrane region" description="Helical" evidence="1">
    <location>
        <begin position="10"/>
        <end position="30"/>
    </location>
</feature>
<proteinExistence type="inferred from homology"/>
<organism>
    <name type="scientific">Escherichia coli O139:H28 (strain E24377A / ETEC)</name>
    <dbReference type="NCBI Taxonomy" id="331111"/>
    <lineage>
        <taxon>Bacteria</taxon>
        <taxon>Pseudomonadati</taxon>
        <taxon>Pseudomonadota</taxon>
        <taxon>Gammaproteobacteria</taxon>
        <taxon>Enterobacterales</taxon>
        <taxon>Enterobacteriaceae</taxon>
        <taxon>Escherichia</taxon>
    </lineage>
</organism>
<dbReference type="EMBL" id="CP000800">
    <property type="protein sequence ID" value="ABV18337.1"/>
    <property type="molecule type" value="Genomic_DNA"/>
</dbReference>
<dbReference type="RefSeq" id="WP_001326397.1">
    <property type="nucleotide sequence ID" value="NC_009801.1"/>
</dbReference>
<dbReference type="SMR" id="A7ZJ79"/>
<dbReference type="GeneID" id="75204951"/>
<dbReference type="KEGG" id="ecw:EcE24377A_0722"/>
<dbReference type="HOGENOM" id="CLU_077094_2_0_6"/>
<dbReference type="Proteomes" id="UP000001122">
    <property type="component" value="Chromosome"/>
</dbReference>
<dbReference type="GO" id="GO:0005886">
    <property type="term" value="C:plasma membrane"/>
    <property type="evidence" value="ECO:0007669"/>
    <property type="project" value="UniProtKB-SubCell"/>
</dbReference>
<dbReference type="GO" id="GO:0005524">
    <property type="term" value="F:ATP binding"/>
    <property type="evidence" value="ECO:0007669"/>
    <property type="project" value="UniProtKB-UniRule"/>
</dbReference>
<dbReference type="GO" id="GO:0008556">
    <property type="term" value="F:P-type potassium transmembrane transporter activity"/>
    <property type="evidence" value="ECO:0007669"/>
    <property type="project" value="InterPro"/>
</dbReference>
<dbReference type="HAMAP" id="MF_00276">
    <property type="entry name" value="KdpC"/>
    <property type="match status" value="1"/>
</dbReference>
<dbReference type="InterPro" id="IPR003820">
    <property type="entry name" value="KdpC"/>
</dbReference>
<dbReference type="NCBIfam" id="TIGR00681">
    <property type="entry name" value="kdpC"/>
    <property type="match status" value="1"/>
</dbReference>
<dbReference type="NCBIfam" id="NF001454">
    <property type="entry name" value="PRK00315.1"/>
    <property type="match status" value="1"/>
</dbReference>
<dbReference type="PANTHER" id="PTHR30042">
    <property type="entry name" value="POTASSIUM-TRANSPORTING ATPASE C CHAIN"/>
    <property type="match status" value="1"/>
</dbReference>
<dbReference type="PANTHER" id="PTHR30042:SF2">
    <property type="entry name" value="POTASSIUM-TRANSPORTING ATPASE KDPC SUBUNIT"/>
    <property type="match status" value="1"/>
</dbReference>
<dbReference type="Pfam" id="PF02669">
    <property type="entry name" value="KdpC"/>
    <property type="match status" value="1"/>
</dbReference>
<dbReference type="PIRSF" id="PIRSF001296">
    <property type="entry name" value="K_ATPase_KdpC"/>
    <property type="match status" value="1"/>
</dbReference>
<protein>
    <recommendedName>
        <fullName evidence="1">Potassium-transporting ATPase KdpC subunit</fullName>
    </recommendedName>
    <alternativeName>
        <fullName evidence="1">ATP phosphohydrolase [potassium-transporting] C chain</fullName>
    </alternativeName>
    <alternativeName>
        <fullName evidence="1">Potassium-binding and translocating subunit C</fullName>
    </alternativeName>
    <alternativeName>
        <fullName evidence="1">Potassium-translocating ATPase C chain</fullName>
    </alternativeName>
</protein>
<evidence type="ECO:0000255" key="1">
    <source>
        <dbReference type="HAMAP-Rule" id="MF_00276"/>
    </source>
</evidence>
<keyword id="KW-0067">ATP-binding</keyword>
<keyword id="KW-0997">Cell inner membrane</keyword>
<keyword id="KW-1003">Cell membrane</keyword>
<keyword id="KW-0406">Ion transport</keyword>
<keyword id="KW-0472">Membrane</keyword>
<keyword id="KW-0547">Nucleotide-binding</keyword>
<keyword id="KW-0630">Potassium</keyword>
<keyword id="KW-0633">Potassium transport</keyword>
<keyword id="KW-1185">Reference proteome</keyword>
<keyword id="KW-0812">Transmembrane</keyword>
<keyword id="KW-1133">Transmembrane helix</keyword>
<keyword id="KW-0813">Transport</keyword>
<accession>A7ZJ79</accession>
<sequence length="190" mass="20413">MRGLRPALSTFIFLLLITGGVYPLLTTVLGQWWFPWQANGSLIREGDTVRGSALIGQNFTGNGYFQGRPSATAEMPYNPQASGGSNLAVSNPELDKQIAARVAALRAANPDASTNVPVELVTASASGLDNNITPQAAAWQIPRVAKARNLSVEQLTQLIAKYSQQPLVKYIGQPVINIVELNLALDKLDE</sequence>
<gene>
    <name evidence="1" type="primary">kdpC</name>
    <name type="ordered locus">EcE24377A_0722</name>
</gene>
<reference key="1">
    <citation type="journal article" date="2008" name="J. Bacteriol.">
        <title>The pangenome structure of Escherichia coli: comparative genomic analysis of E. coli commensal and pathogenic isolates.</title>
        <authorList>
            <person name="Rasko D.A."/>
            <person name="Rosovitz M.J."/>
            <person name="Myers G.S.A."/>
            <person name="Mongodin E.F."/>
            <person name="Fricke W.F."/>
            <person name="Gajer P."/>
            <person name="Crabtree J."/>
            <person name="Sebaihia M."/>
            <person name="Thomson N.R."/>
            <person name="Chaudhuri R."/>
            <person name="Henderson I.R."/>
            <person name="Sperandio V."/>
            <person name="Ravel J."/>
        </authorList>
    </citation>
    <scope>NUCLEOTIDE SEQUENCE [LARGE SCALE GENOMIC DNA]</scope>
    <source>
        <strain>E24377A / ETEC</strain>
    </source>
</reference>